<reference key="1">
    <citation type="submission" date="1994-01" db="EMBL/GenBank/DDBJ databases">
        <title>Characterization of a tomato yellow leaf curl virus isolated from southeast Spain (almeria).</title>
        <authorList>
            <person name="Reina J."/>
            <person name="Cuadrado-Gomez I.M."/>
            <person name="Jimenez J."/>
            <person name="Bejarano E.R."/>
        </authorList>
    </citation>
    <scope>NUCLEOTIDE SEQUENCE [GENOMIC DNA]</scope>
</reference>
<proteinExistence type="inferred from homology"/>
<sequence length="134" mass="16016">MDLRTGEYITAHQATSGVYTFEITNPLYFTITRHNQQPFNSKYNLLTFQIRFNHNLRKALGIHKCFLNFRIWTTLQSPTGHFLRVFRFQVYKYLNNIGVISLNNVIRAVDYVLFDVFENTIDVIEQHEIKYNLY</sequence>
<feature type="chain" id="PRO_0000323684" description="Replication enhancer protein">
    <location>
        <begin position="1"/>
        <end position="134"/>
    </location>
</feature>
<organismHost>
    <name type="scientific">Solanum lycopersicum</name>
    <name type="common">Tomato</name>
    <name type="synonym">Lycopersicon esculentum</name>
    <dbReference type="NCBI Taxonomy" id="4081"/>
</organismHost>
<protein>
    <recommendedName>
        <fullName>Replication enhancer protein</fullName>
        <shortName>REn</shortName>
    </recommendedName>
    <alternativeName>
        <fullName>Protein C3</fullName>
    </alternativeName>
    <alternativeName>
        <fullName>Protein L3</fullName>
    </alternativeName>
</protein>
<name>REN_TYCS2</name>
<comment type="function">
    <text evidence="1">Increases viral DNA accumulation. Enhances infectivity and symptom expression (By similarity).</text>
</comment>
<comment type="subunit">
    <text evidence="1">Homooligomer. Interacts with the replication-associated protein (REP). Interacts with host proliferating cell nuclear antigen (PCNA). Interacts with host retinoblastoma-related protein 1 (RBR1), and may thereby deregulate the host cell cycle. Oligomerization and interaction with PCNA are necessary for optimal replication enhancement (By similarity).</text>
</comment>
<comment type="similarity">
    <text evidence="2">Belongs to the geminiviridae replication enhancer protein family.</text>
</comment>
<evidence type="ECO:0000250" key="1"/>
<evidence type="ECO:0000305" key="2"/>
<keyword id="KW-0945">Host-virus interaction</keyword>
<dbReference type="EMBL" id="L27708">
    <property type="protein sequence ID" value="AAA47953.1"/>
    <property type="molecule type" value="Genomic_DNA"/>
</dbReference>
<dbReference type="Proteomes" id="UP000008266">
    <property type="component" value="Genome"/>
</dbReference>
<dbReference type="GO" id="GO:0016032">
    <property type="term" value="P:viral process"/>
    <property type="evidence" value="ECO:0007669"/>
    <property type="project" value="InterPro"/>
</dbReference>
<dbReference type="InterPro" id="IPR000657">
    <property type="entry name" value="Gemini_AL3"/>
</dbReference>
<dbReference type="Pfam" id="PF01407">
    <property type="entry name" value="Gemini_AL3"/>
    <property type="match status" value="1"/>
</dbReference>
<dbReference type="PRINTS" id="PR00231">
    <property type="entry name" value="GEMCOATAL3"/>
</dbReference>
<accession>Q67618</accession>
<organism>
    <name type="scientific">Tomato yellow leaf curl Sardinia virus (isolate Spain-2)</name>
    <name type="common">TYLCSV</name>
    <dbReference type="NCBI Taxonomy" id="221538"/>
    <lineage>
        <taxon>Viruses</taxon>
        <taxon>Monodnaviria</taxon>
        <taxon>Shotokuvirae</taxon>
        <taxon>Cressdnaviricota</taxon>
        <taxon>Repensiviricetes</taxon>
        <taxon>Geplafuvirales</taxon>
        <taxon>Geminiviridae</taxon>
        <taxon>Begomovirus</taxon>
        <taxon>Tomato yellow leaf curl Sardinia virus</taxon>
    </lineage>
</organism>
<gene>
    <name type="ORF">C3</name>
    <name type="ORF">L3</name>
</gene>